<name>MSCL_BURCJ</name>
<feature type="chain" id="PRO_1000094883" description="Large-conductance mechanosensitive channel">
    <location>
        <begin position="1"/>
        <end position="143"/>
    </location>
</feature>
<feature type="transmembrane region" description="Helical" evidence="1">
    <location>
        <begin position="10"/>
        <end position="30"/>
    </location>
</feature>
<feature type="transmembrane region" description="Helical" evidence="1">
    <location>
        <begin position="89"/>
        <end position="109"/>
    </location>
</feature>
<gene>
    <name evidence="1" type="primary">mscL</name>
    <name type="ordered locus">BceJ2315_19870</name>
    <name type="ORF">BCAL2024</name>
</gene>
<dbReference type="EMBL" id="AM747720">
    <property type="protein sequence ID" value="CAR52324.1"/>
    <property type="molecule type" value="Genomic_DNA"/>
</dbReference>
<dbReference type="RefSeq" id="WP_006487991.1">
    <property type="nucleotide sequence ID" value="NC_011000.1"/>
</dbReference>
<dbReference type="GeneID" id="93142378"/>
<dbReference type="KEGG" id="bcj:BCAL2024"/>
<dbReference type="eggNOG" id="COG1970">
    <property type="taxonomic scope" value="Bacteria"/>
</dbReference>
<dbReference type="HOGENOM" id="CLU_095787_0_1_4"/>
<dbReference type="BioCyc" id="BCEN216591:G1G1V-2222-MONOMER"/>
<dbReference type="Proteomes" id="UP000001035">
    <property type="component" value="Chromosome 1"/>
</dbReference>
<dbReference type="GO" id="GO:0005886">
    <property type="term" value="C:plasma membrane"/>
    <property type="evidence" value="ECO:0007669"/>
    <property type="project" value="UniProtKB-SubCell"/>
</dbReference>
<dbReference type="GO" id="GO:0008381">
    <property type="term" value="F:mechanosensitive monoatomic ion channel activity"/>
    <property type="evidence" value="ECO:0007669"/>
    <property type="project" value="UniProtKB-UniRule"/>
</dbReference>
<dbReference type="Gene3D" id="1.10.1200.120">
    <property type="entry name" value="Large-conductance mechanosensitive channel, MscL, domain 1"/>
    <property type="match status" value="1"/>
</dbReference>
<dbReference type="HAMAP" id="MF_00115">
    <property type="entry name" value="MscL"/>
    <property type="match status" value="1"/>
</dbReference>
<dbReference type="InterPro" id="IPR019823">
    <property type="entry name" value="Mechanosensitive_channel_CS"/>
</dbReference>
<dbReference type="InterPro" id="IPR001185">
    <property type="entry name" value="MS_channel"/>
</dbReference>
<dbReference type="InterPro" id="IPR037673">
    <property type="entry name" value="MSC/AndL"/>
</dbReference>
<dbReference type="InterPro" id="IPR036019">
    <property type="entry name" value="MscL_channel"/>
</dbReference>
<dbReference type="NCBIfam" id="TIGR00220">
    <property type="entry name" value="mscL"/>
    <property type="match status" value="1"/>
</dbReference>
<dbReference type="NCBIfam" id="NF001843">
    <property type="entry name" value="PRK00567.1-4"/>
    <property type="match status" value="1"/>
</dbReference>
<dbReference type="NCBIfam" id="NF010557">
    <property type="entry name" value="PRK13952.1"/>
    <property type="match status" value="1"/>
</dbReference>
<dbReference type="PANTHER" id="PTHR30266:SF2">
    <property type="entry name" value="LARGE-CONDUCTANCE MECHANOSENSITIVE CHANNEL"/>
    <property type="match status" value="1"/>
</dbReference>
<dbReference type="PANTHER" id="PTHR30266">
    <property type="entry name" value="MECHANOSENSITIVE CHANNEL MSCL"/>
    <property type="match status" value="1"/>
</dbReference>
<dbReference type="Pfam" id="PF01741">
    <property type="entry name" value="MscL"/>
    <property type="match status" value="1"/>
</dbReference>
<dbReference type="PRINTS" id="PR01264">
    <property type="entry name" value="MECHCHANNEL"/>
</dbReference>
<dbReference type="SUPFAM" id="SSF81330">
    <property type="entry name" value="Gated mechanosensitive channel"/>
    <property type="match status" value="1"/>
</dbReference>
<dbReference type="PROSITE" id="PS01327">
    <property type="entry name" value="MSCL"/>
    <property type="match status" value="1"/>
</dbReference>
<comment type="function">
    <text evidence="1">Channel that opens in response to stretch forces in the membrane lipid bilayer. May participate in the regulation of osmotic pressure changes within the cell.</text>
</comment>
<comment type="subunit">
    <text evidence="1">Homopentamer.</text>
</comment>
<comment type="subcellular location">
    <subcellularLocation>
        <location evidence="1">Cell inner membrane</location>
        <topology evidence="1">Multi-pass membrane protein</topology>
    </subcellularLocation>
</comment>
<comment type="similarity">
    <text evidence="1">Belongs to the MscL family.</text>
</comment>
<keyword id="KW-0997">Cell inner membrane</keyword>
<keyword id="KW-1003">Cell membrane</keyword>
<keyword id="KW-0407">Ion channel</keyword>
<keyword id="KW-0406">Ion transport</keyword>
<keyword id="KW-0472">Membrane</keyword>
<keyword id="KW-0812">Transmembrane</keyword>
<keyword id="KW-1133">Transmembrane helix</keyword>
<keyword id="KW-0813">Transport</keyword>
<protein>
    <recommendedName>
        <fullName evidence="1">Large-conductance mechanosensitive channel</fullName>
    </recommendedName>
</protein>
<proteinExistence type="inferred from homology"/>
<reference key="1">
    <citation type="journal article" date="2009" name="J. Bacteriol.">
        <title>The genome of Burkholderia cenocepacia J2315, an epidemic pathogen of cystic fibrosis patients.</title>
        <authorList>
            <person name="Holden M.T."/>
            <person name="Seth-Smith H.M."/>
            <person name="Crossman L.C."/>
            <person name="Sebaihia M."/>
            <person name="Bentley S.D."/>
            <person name="Cerdeno-Tarraga A.M."/>
            <person name="Thomson N.R."/>
            <person name="Bason N."/>
            <person name="Quail M.A."/>
            <person name="Sharp S."/>
            <person name="Cherevach I."/>
            <person name="Churcher C."/>
            <person name="Goodhead I."/>
            <person name="Hauser H."/>
            <person name="Holroyd N."/>
            <person name="Mungall K."/>
            <person name="Scott P."/>
            <person name="Walker D."/>
            <person name="White B."/>
            <person name="Rose H."/>
            <person name="Iversen P."/>
            <person name="Mil-Homens D."/>
            <person name="Rocha E.P."/>
            <person name="Fialho A.M."/>
            <person name="Baldwin A."/>
            <person name="Dowson C."/>
            <person name="Barrell B.G."/>
            <person name="Govan J.R."/>
            <person name="Vandamme P."/>
            <person name="Hart C.A."/>
            <person name="Mahenthiralingam E."/>
            <person name="Parkhill J."/>
        </authorList>
    </citation>
    <scope>NUCLEOTIDE SEQUENCE [LARGE SCALE GENOMIC DNA]</scope>
    <source>
        <strain>ATCC BAA-245 / DSM 16553 / LMG 16656 / NCTC 13227 / J2315 / CF5610</strain>
    </source>
</reference>
<accession>B4EC31</accession>
<sequence length="143" mass="15464">MSIIKEFKEFAVKGNVMDLAVGVIIGGAFSKIVDSVVKDLIMPVIGVLTGGLDFSNKFVLLGTIPPTFKGNPDSFKDLQAAGVAAFGYGSFITVAINFVILAFIIFLMVKFINKLRKPEEAAPAATPEDTVLLREIRDSLKQR</sequence>
<organism>
    <name type="scientific">Burkholderia cenocepacia (strain ATCC BAA-245 / DSM 16553 / LMG 16656 / NCTC 13227 / J2315 / CF5610)</name>
    <name type="common">Burkholderia cepacia (strain J2315)</name>
    <dbReference type="NCBI Taxonomy" id="216591"/>
    <lineage>
        <taxon>Bacteria</taxon>
        <taxon>Pseudomonadati</taxon>
        <taxon>Pseudomonadota</taxon>
        <taxon>Betaproteobacteria</taxon>
        <taxon>Burkholderiales</taxon>
        <taxon>Burkholderiaceae</taxon>
        <taxon>Burkholderia</taxon>
        <taxon>Burkholderia cepacia complex</taxon>
    </lineage>
</organism>
<evidence type="ECO:0000255" key="1">
    <source>
        <dbReference type="HAMAP-Rule" id="MF_00115"/>
    </source>
</evidence>